<keyword id="KW-0025">Alternative splicing</keyword>
<keyword id="KW-1003">Cell membrane</keyword>
<keyword id="KW-0963">Cytoplasm</keyword>
<keyword id="KW-0378">Hydrolase</keyword>
<keyword id="KW-0880">Kelch repeat</keyword>
<keyword id="KW-0464">Manganese</keyword>
<keyword id="KW-0472">Membrane</keyword>
<keyword id="KW-0479">Metal-binding</keyword>
<keyword id="KW-0539">Nucleus</keyword>
<keyword id="KW-0597">Phosphoprotein</keyword>
<keyword id="KW-0904">Protein phosphatase</keyword>
<keyword id="KW-1185">Reference proteome</keyword>
<keyword id="KW-0677">Repeat</keyword>
<comment type="function">
    <text evidence="4">Phosphatase involved in elongation process, probably by acting as a regulator of brassinolide signaling.</text>
</comment>
<comment type="catalytic activity">
    <reaction>
        <text>O-phospho-L-seryl-[protein] + H2O = L-seryl-[protein] + phosphate</text>
        <dbReference type="Rhea" id="RHEA:20629"/>
        <dbReference type="Rhea" id="RHEA-COMP:9863"/>
        <dbReference type="Rhea" id="RHEA-COMP:11604"/>
        <dbReference type="ChEBI" id="CHEBI:15377"/>
        <dbReference type="ChEBI" id="CHEBI:29999"/>
        <dbReference type="ChEBI" id="CHEBI:43474"/>
        <dbReference type="ChEBI" id="CHEBI:83421"/>
        <dbReference type="EC" id="3.1.3.16"/>
    </reaction>
</comment>
<comment type="catalytic activity">
    <reaction>
        <text>O-phospho-L-threonyl-[protein] + H2O = L-threonyl-[protein] + phosphate</text>
        <dbReference type="Rhea" id="RHEA:47004"/>
        <dbReference type="Rhea" id="RHEA-COMP:11060"/>
        <dbReference type="Rhea" id="RHEA-COMP:11605"/>
        <dbReference type="ChEBI" id="CHEBI:15377"/>
        <dbReference type="ChEBI" id="CHEBI:30013"/>
        <dbReference type="ChEBI" id="CHEBI:43474"/>
        <dbReference type="ChEBI" id="CHEBI:61977"/>
        <dbReference type="EC" id="3.1.3.16"/>
    </reaction>
</comment>
<comment type="cofactor">
    <cofactor evidence="1">
        <name>Mn(2+)</name>
        <dbReference type="ChEBI" id="CHEBI:29035"/>
    </cofactor>
    <text evidence="1">Binds 2 manganese ions per subunit.</text>
</comment>
<comment type="subunit">
    <text evidence="5">Interacts with BSK8.</text>
</comment>
<comment type="subcellular location">
    <subcellularLocation>
        <location evidence="5">Cytoplasm</location>
    </subcellularLocation>
    <subcellularLocation>
        <location evidence="5">Cell membrane</location>
    </subcellularLocation>
    <subcellularLocation>
        <location evidence="1">Nucleus</location>
    </subcellularLocation>
    <text evidence="5">Mainly cytoplasmic. Colocalizes with BSK8 at the plasma membrane.</text>
</comment>
<comment type="alternative products">
    <event type="alternative splicing"/>
    <isoform>
        <id>Q9SJF0-1</id>
        <name>1</name>
        <sequence type="displayed"/>
    </isoform>
    <text>A number of isoforms are produced. According to EST sequences.</text>
</comment>
<comment type="tissue specificity">
    <text evidence="4">Expressed throughout the plant, with a higher level in younger parts.</text>
</comment>
<comment type="similarity">
    <text evidence="6">Belongs to the PPP phosphatase family. BSU subfamily.</text>
</comment>
<comment type="sequence caution" evidence="6">
    <conflict type="erroneous gene model prediction">
        <sequence resource="EMBL-CDS" id="AAF22889"/>
    </conflict>
</comment>
<proteinExistence type="evidence at protein level"/>
<name>BSL2_ARATH</name>
<dbReference type="EC" id="3.1.3.16"/>
<dbReference type="EMBL" id="AC006932">
    <property type="protein sequence ID" value="AAF22889.1"/>
    <property type="status" value="ALT_SEQ"/>
    <property type="molecule type" value="Genomic_DNA"/>
</dbReference>
<dbReference type="EMBL" id="CP002684">
    <property type="protein sequence ID" value="AEE28287.1"/>
    <property type="molecule type" value="Genomic_DNA"/>
</dbReference>
<dbReference type="EMBL" id="AK230437">
    <property type="protein sequence ID" value="BAF02235.1"/>
    <property type="molecule type" value="mRNA"/>
</dbReference>
<dbReference type="PIR" id="E86217">
    <property type="entry name" value="E86217"/>
</dbReference>
<dbReference type="RefSeq" id="NP_172318.1">
    <molecule id="Q9SJF0-1"/>
    <property type="nucleotide sequence ID" value="NM_100715.4"/>
</dbReference>
<dbReference type="SMR" id="Q9SJF0"/>
<dbReference type="BioGRID" id="22603">
    <property type="interactions" value="4"/>
</dbReference>
<dbReference type="FunCoup" id="Q9SJF0">
    <property type="interactions" value="412"/>
</dbReference>
<dbReference type="STRING" id="3702.Q9SJF0"/>
<dbReference type="GlyGen" id="Q9SJF0">
    <property type="glycosylation" value="4 sites"/>
</dbReference>
<dbReference type="iPTMnet" id="Q9SJF0"/>
<dbReference type="PaxDb" id="3702-AT1G08420.1"/>
<dbReference type="ProteomicsDB" id="239101">
    <molecule id="Q9SJF0-1"/>
</dbReference>
<dbReference type="EnsemblPlants" id="AT1G08420.1">
    <molecule id="Q9SJF0-1"/>
    <property type="protein sequence ID" value="AT1G08420.1"/>
    <property type="gene ID" value="AT1G08420"/>
</dbReference>
<dbReference type="GeneID" id="837362"/>
<dbReference type="Gramene" id="AT1G08420.1">
    <molecule id="Q9SJF0-1"/>
    <property type="protein sequence ID" value="AT1G08420.1"/>
    <property type="gene ID" value="AT1G08420"/>
</dbReference>
<dbReference type="KEGG" id="ath:AT1G08420"/>
<dbReference type="Araport" id="AT1G08420"/>
<dbReference type="TAIR" id="AT1G08420">
    <property type="gene designation" value="BSL2"/>
</dbReference>
<dbReference type="eggNOG" id="KOG0374">
    <property type="taxonomic scope" value="Eukaryota"/>
</dbReference>
<dbReference type="eggNOG" id="KOG0379">
    <property type="taxonomic scope" value="Eukaryota"/>
</dbReference>
<dbReference type="HOGENOM" id="CLU_004962_7_0_1"/>
<dbReference type="InParanoid" id="Q9SJF0"/>
<dbReference type="OMA" id="MVPVNDH"/>
<dbReference type="OrthoDB" id="309851at2759"/>
<dbReference type="PhylomeDB" id="Q9SJF0"/>
<dbReference type="PRO" id="PR:Q9SJF0"/>
<dbReference type="Proteomes" id="UP000006548">
    <property type="component" value="Chromosome 1"/>
</dbReference>
<dbReference type="ExpressionAtlas" id="Q9SJF0">
    <property type="expression patterns" value="baseline and differential"/>
</dbReference>
<dbReference type="GO" id="GO:0005737">
    <property type="term" value="C:cytoplasm"/>
    <property type="evidence" value="ECO:0000314"/>
    <property type="project" value="UniProtKB"/>
</dbReference>
<dbReference type="GO" id="GO:0005576">
    <property type="term" value="C:extracellular region"/>
    <property type="evidence" value="ECO:0007005"/>
    <property type="project" value="TAIR"/>
</dbReference>
<dbReference type="GO" id="GO:0005634">
    <property type="term" value="C:nucleus"/>
    <property type="evidence" value="ECO:0007669"/>
    <property type="project" value="UniProtKB-SubCell"/>
</dbReference>
<dbReference type="GO" id="GO:0005886">
    <property type="term" value="C:plasma membrane"/>
    <property type="evidence" value="ECO:0000314"/>
    <property type="project" value="UniProtKB"/>
</dbReference>
<dbReference type="GO" id="GO:0046872">
    <property type="term" value="F:metal ion binding"/>
    <property type="evidence" value="ECO:0007669"/>
    <property type="project" value="UniProtKB-KW"/>
</dbReference>
<dbReference type="GO" id="GO:0004722">
    <property type="term" value="F:protein serine/threonine phosphatase activity"/>
    <property type="evidence" value="ECO:0007669"/>
    <property type="project" value="UniProtKB-EC"/>
</dbReference>
<dbReference type="GO" id="GO:0009742">
    <property type="term" value="P:brassinosteroid mediated signaling pathway"/>
    <property type="evidence" value="ECO:0007669"/>
    <property type="project" value="InterPro"/>
</dbReference>
<dbReference type="CDD" id="cd07419">
    <property type="entry name" value="MPP_Bsu1_C"/>
    <property type="match status" value="1"/>
</dbReference>
<dbReference type="FunFam" id="2.120.10.80:FF:000042">
    <property type="entry name" value="Serine/threonine-protein phosphatase"/>
    <property type="match status" value="1"/>
</dbReference>
<dbReference type="FunFam" id="2.120.10.80:FF:000113">
    <property type="entry name" value="Serine/threonine-protein phosphatase"/>
    <property type="match status" value="1"/>
</dbReference>
<dbReference type="FunFam" id="3.60.21.10:FF:000008">
    <property type="entry name" value="Serine/threonine-protein phosphatase"/>
    <property type="match status" value="1"/>
</dbReference>
<dbReference type="Gene3D" id="3.60.21.10">
    <property type="match status" value="1"/>
</dbReference>
<dbReference type="Gene3D" id="2.120.10.80">
    <property type="entry name" value="Kelch-type beta propeller"/>
    <property type="match status" value="3"/>
</dbReference>
<dbReference type="InterPro" id="IPR004843">
    <property type="entry name" value="Calcineurin-like_PHP_ApaH"/>
</dbReference>
<dbReference type="InterPro" id="IPR015915">
    <property type="entry name" value="Kelch-typ_b-propeller"/>
</dbReference>
<dbReference type="InterPro" id="IPR011498">
    <property type="entry name" value="Kelch_2"/>
</dbReference>
<dbReference type="InterPro" id="IPR029052">
    <property type="entry name" value="Metallo-depent_PP-like"/>
</dbReference>
<dbReference type="InterPro" id="IPR041758">
    <property type="entry name" value="MPP_BSL_C"/>
</dbReference>
<dbReference type="InterPro" id="IPR006186">
    <property type="entry name" value="Ser/Thr-sp_prot-phosphatase"/>
</dbReference>
<dbReference type="InterPro" id="IPR012391">
    <property type="entry name" value="Ser/Thr_prot_Pase_BSU1"/>
</dbReference>
<dbReference type="PANTHER" id="PTHR46422">
    <property type="entry name" value="SERINE/THREONINE-PROTEIN PHOSPHATASE BSL3"/>
    <property type="match status" value="1"/>
</dbReference>
<dbReference type="PANTHER" id="PTHR46422:SF7">
    <property type="entry name" value="SERINE_THREONINE-PROTEIN PHOSPHATASE BSL2-RELATED"/>
    <property type="match status" value="1"/>
</dbReference>
<dbReference type="Pfam" id="PF07646">
    <property type="entry name" value="Kelch_2"/>
    <property type="match status" value="1"/>
</dbReference>
<dbReference type="Pfam" id="PF24681">
    <property type="entry name" value="Kelch_KLHDC2_KLHL20_DRC7"/>
    <property type="match status" value="1"/>
</dbReference>
<dbReference type="Pfam" id="PF00149">
    <property type="entry name" value="Metallophos"/>
    <property type="match status" value="1"/>
</dbReference>
<dbReference type="PIRSF" id="PIRSF036363">
    <property type="entry name" value="PPP_BSU1"/>
    <property type="match status" value="1"/>
</dbReference>
<dbReference type="PRINTS" id="PR00114">
    <property type="entry name" value="STPHPHTASE"/>
</dbReference>
<dbReference type="SMART" id="SM00156">
    <property type="entry name" value="PP2Ac"/>
    <property type="match status" value="1"/>
</dbReference>
<dbReference type="SUPFAM" id="SSF117281">
    <property type="entry name" value="Kelch motif"/>
    <property type="match status" value="1"/>
</dbReference>
<dbReference type="SUPFAM" id="SSF56300">
    <property type="entry name" value="Metallo-dependent phosphatases"/>
    <property type="match status" value="1"/>
</dbReference>
<dbReference type="PROSITE" id="PS00125">
    <property type="entry name" value="SER_THR_PHOSPHATASE"/>
    <property type="match status" value="1"/>
</dbReference>
<gene>
    <name type="primary">BSL2</name>
    <name type="ordered locus">At1g08420</name>
    <name type="ORF">T27G7.10</name>
</gene>
<organism>
    <name type="scientific">Arabidopsis thaliana</name>
    <name type="common">Mouse-ear cress</name>
    <dbReference type="NCBI Taxonomy" id="3702"/>
    <lineage>
        <taxon>Eukaryota</taxon>
        <taxon>Viridiplantae</taxon>
        <taxon>Streptophyta</taxon>
        <taxon>Embryophyta</taxon>
        <taxon>Tracheophyta</taxon>
        <taxon>Spermatophyta</taxon>
        <taxon>Magnoliopsida</taxon>
        <taxon>eudicotyledons</taxon>
        <taxon>Gunneridae</taxon>
        <taxon>Pentapetalae</taxon>
        <taxon>rosids</taxon>
        <taxon>malvids</taxon>
        <taxon>Brassicales</taxon>
        <taxon>Brassicaceae</taxon>
        <taxon>Camelineae</taxon>
        <taxon>Arabidopsis</taxon>
    </lineage>
</organism>
<protein>
    <recommendedName>
        <fullName>Serine/threonine-protein phosphatase BSL2</fullName>
        <ecNumber>3.1.3.16</ecNumber>
    </recommendedName>
    <alternativeName>
        <fullName>BSU1-like protein 2</fullName>
    </alternativeName>
</protein>
<sequence length="1018" mass="108580">MDEDSSMVADNDQDREFQSLDGGQSPSPMERETPQQMNDQSPPPEGGSVPTPPPSDPNPATSQQQAAAVVGQEQQPALVVGPRCAPTYSVVDAMMDKKEDGPGPRCGHTLTAVPAVGDEGTPGYIGPRLVLFGGATALEGNSGGTGTPTSAGSAGIRLAGATADVHCYDVLSNKWTRLTPFGEPPTPRAAHVATAVGTMVVIQGGIGPAGLSAEDLHVLDLTQQRPRWHRVVVQGPGPGPRYGHVMALVGQRYLMAIGGNDGKRPLADVWALDTAAKPYEWRKLEPEGEGPPPCMYATASARSDGLLLLCGGRDANSVPLASAYGLAKHRDGRWEWAIAPGVSPSSRYQHAAVFVNARLHVSGGALGGGRMVEDSSSVAVLDTAAGVWCDTKSVVTSPRTGRYSADAAGGDASVELTRRCRHAAAAVGDLIFIYGGLRGGVLLDDLLVAEDLAAAETTYAASHAAAAAATNSPPGRLPGRYGFSDERNRELSESAADGAVVLGSPVAPPVNGDMHTDISPENALLPGTRRTNKGVEYLVEASAAEAEAISATLAAAKARQVNGEVELPDRDCGAEATPSGKPTFSLIKPDSMGSMSVTPAGIRLHHRAVVVAAETGGALGGMVRQLSIDQFENEGRRVSYGTPESATAARKLLDRQMSINSVPKKVIAHLLKPRGWKPPVRRQFFLDCNEIADLCDSAERIFASEPTVLQLKAPIKIFGDLHGQFGDLMRLFDEYGSPSTAGDISYIDYLFLGDYVDRGQHSLETISLLLALKVEYQHNVHLIRGNHEAADINALFGFRIECIERMGERDGIWVWHRINRLFNWLPLAASIEKKIICMHGGIGRSINHVEQIENIQRPITMEAGSIVLMDLLWSDPTENDSVEGLRPNARGPGLVTFGPDRVMEFCNNNDLQLIVRAHECVMDGFERFAQGHLITLFSATNYCGTANNAGAILVLGRDLVVVPKLIHPLPPALSSPETSPERHIEDTWMQELNANRPATPTRGRPQNSNDRGGSLAWM</sequence>
<evidence type="ECO:0000250" key="1"/>
<evidence type="ECO:0000250" key="2">
    <source>
        <dbReference type="UniProtKB" id="Q9LR78"/>
    </source>
</evidence>
<evidence type="ECO:0000256" key="3">
    <source>
        <dbReference type="SAM" id="MobiDB-lite"/>
    </source>
</evidence>
<evidence type="ECO:0000269" key="4">
    <source>
    </source>
</evidence>
<evidence type="ECO:0000269" key="5">
    <source>
    </source>
</evidence>
<evidence type="ECO:0000305" key="6"/>
<reference key="1">
    <citation type="journal article" date="2000" name="Nature">
        <title>Sequence and analysis of chromosome 1 of the plant Arabidopsis thaliana.</title>
        <authorList>
            <person name="Theologis A."/>
            <person name="Ecker J.R."/>
            <person name="Palm C.J."/>
            <person name="Federspiel N.A."/>
            <person name="Kaul S."/>
            <person name="White O."/>
            <person name="Alonso J."/>
            <person name="Altafi H."/>
            <person name="Araujo R."/>
            <person name="Bowman C.L."/>
            <person name="Brooks S.Y."/>
            <person name="Buehler E."/>
            <person name="Chan A."/>
            <person name="Chao Q."/>
            <person name="Chen H."/>
            <person name="Cheuk R.F."/>
            <person name="Chin C.W."/>
            <person name="Chung M.K."/>
            <person name="Conn L."/>
            <person name="Conway A.B."/>
            <person name="Conway A.R."/>
            <person name="Creasy T.H."/>
            <person name="Dewar K."/>
            <person name="Dunn P."/>
            <person name="Etgu P."/>
            <person name="Feldblyum T.V."/>
            <person name="Feng J.-D."/>
            <person name="Fong B."/>
            <person name="Fujii C.Y."/>
            <person name="Gill J.E."/>
            <person name="Goldsmith A.D."/>
            <person name="Haas B."/>
            <person name="Hansen N.F."/>
            <person name="Hughes B."/>
            <person name="Huizar L."/>
            <person name="Hunter J.L."/>
            <person name="Jenkins J."/>
            <person name="Johnson-Hopson C."/>
            <person name="Khan S."/>
            <person name="Khaykin E."/>
            <person name="Kim C.J."/>
            <person name="Koo H.L."/>
            <person name="Kremenetskaia I."/>
            <person name="Kurtz D.B."/>
            <person name="Kwan A."/>
            <person name="Lam B."/>
            <person name="Langin-Hooper S."/>
            <person name="Lee A."/>
            <person name="Lee J.M."/>
            <person name="Lenz C.A."/>
            <person name="Li J.H."/>
            <person name="Li Y.-P."/>
            <person name="Lin X."/>
            <person name="Liu S.X."/>
            <person name="Liu Z.A."/>
            <person name="Luros J.S."/>
            <person name="Maiti R."/>
            <person name="Marziali A."/>
            <person name="Militscher J."/>
            <person name="Miranda M."/>
            <person name="Nguyen M."/>
            <person name="Nierman W.C."/>
            <person name="Osborne B.I."/>
            <person name="Pai G."/>
            <person name="Peterson J."/>
            <person name="Pham P.K."/>
            <person name="Rizzo M."/>
            <person name="Rooney T."/>
            <person name="Rowley D."/>
            <person name="Sakano H."/>
            <person name="Salzberg S.L."/>
            <person name="Schwartz J.R."/>
            <person name="Shinn P."/>
            <person name="Southwick A.M."/>
            <person name="Sun H."/>
            <person name="Tallon L.J."/>
            <person name="Tambunga G."/>
            <person name="Toriumi M.J."/>
            <person name="Town C.D."/>
            <person name="Utterback T."/>
            <person name="Van Aken S."/>
            <person name="Vaysberg M."/>
            <person name="Vysotskaia V.S."/>
            <person name="Walker M."/>
            <person name="Wu D."/>
            <person name="Yu G."/>
            <person name="Fraser C.M."/>
            <person name="Venter J.C."/>
            <person name="Davis R.W."/>
        </authorList>
    </citation>
    <scope>NUCLEOTIDE SEQUENCE [LARGE SCALE GENOMIC DNA]</scope>
    <source>
        <strain>cv. Columbia</strain>
    </source>
</reference>
<reference key="2">
    <citation type="journal article" date="2017" name="Plant J.">
        <title>Araport11: a complete reannotation of the Arabidopsis thaliana reference genome.</title>
        <authorList>
            <person name="Cheng C.Y."/>
            <person name="Krishnakumar V."/>
            <person name="Chan A.P."/>
            <person name="Thibaud-Nissen F."/>
            <person name="Schobel S."/>
            <person name="Town C.D."/>
        </authorList>
    </citation>
    <scope>GENOME REANNOTATION</scope>
    <source>
        <strain>cv. Columbia</strain>
    </source>
</reference>
<reference key="3">
    <citation type="submission" date="2006-07" db="EMBL/GenBank/DDBJ databases">
        <title>Large-scale analysis of RIKEN Arabidopsis full-length (RAFL) cDNAs.</title>
        <authorList>
            <person name="Totoki Y."/>
            <person name="Seki M."/>
            <person name="Ishida J."/>
            <person name="Nakajima M."/>
            <person name="Enju A."/>
            <person name="Kamiya A."/>
            <person name="Narusaka M."/>
            <person name="Shin-i T."/>
            <person name="Nakagawa M."/>
            <person name="Sakamoto N."/>
            <person name="Oishi K."/>
            <person name="Kohara Y."/>
            <person name="Kobayashi M."/>
            <person name="Toyoda A."/>
            <person name="Sakaki Y."/>
            <person name="Sakurai T."/>
            <person name="Iida K."/>
            <person name="Akiyama K."/>
            <person name="Satou M."/>
            <person name="Toyoda T."/>
            <person name="Konagaya A."/>
            <person name="Carninci P."/>
            <person name="Kawai J."/>
            <person name="Hayashizaki Y."/>
            <person name="Shinozaki K."/>
        </authorList>
    </citation>
    <scope>NUCLEOTIDE SEQUENCE [LARGE SCALE MRNA] OF 282-1018</scope>
    <source>
        <strain>cv. Columbia</strain>
    </source>
</reference>
<reference key="4">
    <citation type="journal article" date="2004" name="Genes Dev.">
        <title>Nuclear protein phosphatases with Kelch-repeat domains modulate the response to brassinosteroids in Arabidopsis.</title>
        <authorList>
            <person name="Mora-Garcia S."/>
            <person name="Vert G."/>
            <person name="Yin Y."/>
            <person name="Cano-Delgado A."/>
            <person name="Cheong H."/>
            <person name="Chory J."/>
        </authorList>
    </citation>
    <scope>FUNCTION</scope>
    <scope>TISSUE SPECIFICITY</scope>
</reference>
<reference key="5">
    <citation type="journal article" date="2007" name="Trends Plant Sci.">
        <title>Arabidopsis PPP family of serine/threonine phosphatases.</title>
        <authorList>
            <person name="Farkas I."/>
            <person name="Dombradi V."/>
            <person name="Miskei M."/>
            <person name="Szabados L."/>
            <person name="Koncz C."/>
        </authorList>
    </citation>
    <scope>GENE FAMILY</scope>
    <scope>NOMENCLATURE</scope>
</reference>
<reference key="6">
    <citation type="journal article" date="2009" name="Plant Physiol.">
        <title>Large-scale Arabidopsis phosphoproteome profiling reveals novel chloroplast kinase substrates and phosphorylation networks.</title>
        <authorList>
            <person name="Reiland S."/>
            <person name="Messerli G."/>
            <person name="Baerenfaller K."/>
            <person name="Gerrits B."/>
            <person name="Endler A."/>
            <person name="Grossmann J."/>
            <person name="Gruissem W."/>
            <person name="Baginsky S."/>
        </authorList>
    </citation>
    <scope>IDENTIFICATION BY MASS SPECTROMETRY [LARGE SCALE ANALYSIS]</scope>
</reference>
<reference key="7">
    <citation type="journal article" date="2014" name="J. Proteome Res.">
        <title>A kinase-phosphatase signaling module with BSK8 and BSL2 involved in regulation of sucrose-phosphate synthase.</title>
        <authorList>
            <person name="Wu X."/>
            <person name="Sklodowski K."/>
            <person name="Encke B."/>
            <person name="Schulze W.X."/>
        </authorList>
    </citation>
    <scope>INTERACTION WITH BSK8</scope>
    <scope>SUBCELLULAR LOCATION</scope>
</reference>
<reference key="8">
    <citation type="journal article" date="2013" name="J. Mol. Biol.">
        <title>Structural characterization of the RLCK family member BSK8: a pseudokinase with an unprecedented architecture.</title>
        <authorList>
            <person name="Grutter C."/>
            <person name="Sreeramulu S."/>
            <person name="Sessa G."/>
            <person name="Rauh D."/>
        </authorList>
    </citation>
    <scope>X-RAY CRYSTALLOGRAPHY (1.50 ANGSTROMS) OF 40-328 IN COMPLEX WITH ATP ANALOG</scope>
</reference>
<feature type="chain" id="PRO_0000058906" description="Serine/threonine-protein phosphatase BSL2">
    <location>
        <begin position="1"/>
        <end position="1018"/>
    </location>
</feature>
<feature type="repeat" description="Kelch 1">
    <location>
        <begin position="149"/>
        <end position="195"/>
    </location>
</feature>
<feature type="repeat" description="Kelch 2">
    <location>
        <begin position="253"/>
        <end position="301"/>
    </location>
</feature>
<feature type="repeat" description="Kelch 3">
    <location>
        <begin position="306"/>
        <end position="356"/>
    </location>
</feature>
<feature type="repeat" description="Kelch 4">
    <location>
        <begin position="362"/>
        <end position="409"/>
    </location>
</feature>
<feature type="repeat" description="Kelch 5">
    <location>
        <begin position="430"/>
        <end position="479"/>
    </location>
</feature>
<feature type="region of interest" description="Disordered" evidence="3">
    <location>
        <begin position="1"/>
        <end position="75"/>
    </location>
</feature>
<feature type="region of interest" description="Disordered" evidence="3">
    <location>
        <begin position="569"/>
        <end position="590"/>
    </location>
</feature>
<feature type="region of interest" description="Disordered" evidence="3">
    <location>
        <begin position="994"/>
        <end position="1018"/>
    </location>
</feature>
<feature type="compositionally biased region" description="Pro residues" evidence="3">
    <location>
        <begin position="41"/>
        <end position="57"/>
    </location>
</feature>
<feature type="compositionally biased region" description="Low complexity" evidence="3">
    <location>
        <begin position="63"/>
        <end position="75"/>
    </location>
</feature>
<feature type="compositionally biased region" description="Polar residues" evidence="3">
    <location>
        <begin position="994"/>
        <end position="1011"/>
    </location>
</feature>
<feature type="active site" description="Proton donor" evidence="1">
    <location>
        <position position="787"/>
    </location>
</feature>
<feature type="binding site" evidence="1">
    <location>
        <position position="720"/>
    </location>
    <ligand>
        <name>Mn(2+)</name>
        <dbReference type="ChEBI" id="CHEBI:29035"/>
        <label>1</label>
    </ligand>
</feature>
<feature type="binding site" evidence="1">
    <location>
        <position position="722"/>
    </location>
    <ligand>
        <name>Mn(2+)</name>
        <dbReference type="ChEBI" id="CHEBI:29035"/>
        <label>1</label>
    </ligand>
</feature>
<feature type="binding site" evidence="1">
    <location>
        <position position="754"/>
    </location>
    <ligand>
        <name>Mn(2+)</name>
        <dbReference type="ChEBI" id="CHEBI:29035"/>
        <label>1</label>
    </ligand>
</feature>
<feature type="binding site" evidence="1">
    <location>
        <position position="754"/>
    </location>
    <ligand>
        <name>Mn(2+)</name>
        <dbReference type="ChEBI" id="CHEBI:29035"/>
        <label>2</label>
    </ligand>
</feature>
<feature type="binding site" evidence="1">
    <location>
        <position position="786"/>
    </location>
    <ligand>
        <name>Mn(2+)</name>
        <dbReference type="ChEBI" id="CHEBI:29035"/>
        <label>2</label>
    </ligand>
</feature>
<feature type="binding site" evidence="1">
    <location>
        <position position="839"/>
    </location>
    <ligand>
        <name>Mn(2+)</name>
        <dbReference type="ChEBI" id="CHEBI:29035"/>
        <label>2</label>
    </ligand>
</feature>
<feature type="binding site" evidence="1">
    <location>
        <position position="918"/>
    </location>
    <ligand>
        <name>Mn(2+)</name>
        <dbReference type="ChEBI" id="CHEBI:29035"/>
        <label>2</label>
    </ligand>
</feature>
<feature type="modified residue" description="Phosphoserine" evidence="2">
    <location>
        <position position="627"/>
    </location>
</feature>
<feature type="modified residue" description="Phosphoserine" evidence="2">
    <location>
        <position position="975"/>
    </location>
</feature>
<accession>Q9SJF0</accession>
<accession>Q0WKX2</accession>